<dbReference type="EMBL" id="AE000782">
    <property type="protein sequence ID" value="AAB89766.1"/>
    <property type="molecule type" value="Genomic_DNA"/>
</dbReference>
<dbReference type="PIR" id="H69434">
    <property type="entry name" value="H69434"/>
</dbReference>
<dbReference type="RefSeq" id="WP_010878978.1">
    <property type="nucleotide sequence ID" value="NC_000917.1"/>
</dbReference>
<dbReference type="SMR" id="O28791"/>
<dbReference type="STRING" id="224325.AF_1481"/>
<dbReference type="PaxDb" id="224325-AF_1481"/>
<dbReference type="EnsemblBacteria" id="AAB89766">
    <property type="protein sequence ID" value="AAB89766"/>
    <property type="gene ID" value="AF_1481"/>
</dbReference>
<dbReference type="KEGG" id="afu:AF_1481"/>
<dbReference type="eggNOG" id="arCOG02681">
    <property type="taxonomic scope" value="Archaea"/>
</dbReference>
<dbReference type="HOGENOM" id="CLU_170073_3_1_2"/>
<dbReference type="OrthoDB" id="135634at2157"/>
<dbReference type="PhylomeDB" id="O28791"/>
<dbReference type="Proteomes" id="UP000002199">
    <property type="component" value="Chromosome"/>
</dbReference>
<dbReference type="HAMAP" id="MF_00794">
    <property type="entry name" value="UPF0330"/>
    <property type="match status" value="1"/>
</dbReference>
<dbReference type="InterPro" id="IPR003847">
    <property type="entry name" value="Put_antitoxin"/>
</dbReference>
<dbReference type="Pfam" id="PF02697">
    <property type="entry name" value="VAPB_antitox"/>
    <property type="match status" value="1"/>
</dbReference>
<gene>
    <name type="ordered locus">AF_1481</name>
</gene>
<sequence>MKTISIRDDVYRKLLEMKDEEDSFSDVIEKLLKRKKTDIRRYFGVLKDSEVLDEIEKSLNARKSARFRV</sequence>
<accession>O28791</accession>
<keyword id="KW-1185">Reference proteome</keyword>
<keyword id="KW-1277">Toxin-antitoxin system</keyword>
<reference key="1">
    <citation type="journal article" date="1997" name="Nature">
        <title>The complete genome sequence of the hyperthermophilic, sulphate-reducing archaeon Archaeoglobus fulgidus.</title>
        <authorList>
            <person name="Klenk H.-P."/>
            <person name="Clayton R.A."/>
            <person name="Tomb J.-F."/>
            <person name="White O."/>
            <person name="Nelson K.E."/>
            <person name="Ketchum K.A."/>
            <person name="Dodson R.J."/>
            <person name="Gwinn M.L."/>
            <person name="Hickey E.K."/>
            <person name="Peterson J.D."/>
            <person name="Richardson D.L."/>
            <person name="Kerlavage A.R."/>
            <person name="Graham D.E."/>
            <person name="Kyrpides N.C."/>
            <person name="Fleischmann R.D."/>
            <person name="Quackenbush J."/>
            <person name="Lee N.H."/>
            <person name="Sutton G.G."/>
            <person name="Gill S.R."/>
            <person name="Kirkness E.F."/>
            <person name="Dougherty B.A."/>
            <person name="McKenney K."/>
            <person name="Adams M.D."/>
            <person name="Loftus B.J."/>
            <person name="Peterson S.N."/>
            <person name="Reich C.I."/>
            <person name="McNeil L.K."/>
            <person name="Badger J.H."/>
            <person name="Glodek A."/>
            <person name="Zhou L."/>
            <person name="Overbeek R."/>
            <person name="Gocayne J.D."/>
            <person name="Weidman J.F."/>
            <person name="McDonald L.A."/>
            <person name="Utterback T.R."/>
            <person name="Cotton M.D."/>
            <person name="Spriggs T."/>
            <person name="Artiach P."/>
            <person name="Kaine B.P."/>
            <person name="Sykes S.M."/>
            <person name="Sadow P.W."/>
            <person name="D'Andrea K.P."/>
            <person name="Bowman C."/>
            <person name="Fujii C."/>
            <person name="Garland S.A."/>
            <person name="Mason T.M."/>
            <person name="Olsen G.J."/>
            <person name="Fraser C.M."/>
            <person name="Smith H.O."/>
            <person name="Woese C.R."/>
            <person name="Venter J.C."/>
        </authorList>
    </citation>
    <scope>NUCLEOTIDE SEQUENCE [LARGE SCALE GENOMIC DNA]</scope>
    <source>
        <strain>ATCC 49558 / DSM 4304 / JCM 9628 / NBRC 100126 / VC-16</strain>
    </source>
</reference>
<evidence type="ECO:0000255" key="1">
    <source>
        <dbReference type="HAMAP-Rule" id="MF_00794"/>
    </source>
</evidence>
<name>Y1481_ARCFU</name>
<proteinExistence type="inferred from homology"/>
<protein>
    <recommendedName>
        <fullName evidence="1">Putative antitoxin AF_1481</fullName>
    </recommendedName>
</protein>
<comment type="function">
    <text evidence="1">Possibly the antitoxin component of a type II toxin-antitoxin (TA) system.</text>
</comment>
<comment type="similarity">
    <text evidence="1">Belongs to the UPF0330 family.</text>
</comment>
<organism>
    <name type="scientific">Archaeoglobus fulgidus (strain ATCC 49558 / DSM 4304 / JCM 9628 / NBRC 100126 / VC-16)</name>
    <dbReference type="NCBI Taxonomy" id="224325"/>
    <lineage>
        <taxon>Archaea</taxon>
        <taxon>Methanobacteriati</taxon>
        <taxon>Methanobacteriota</taxon>
        <taxon>Archaeoglobi</taxon>
        <taxon>Archaeoglobales</taxon>
        <taxon>Archaeoglobaceae</taxon>
        <taxon>Archaeoglobus</taxon>
    </lineage>
</organism>
<feature type="chain" id="PRO_0000157104" description="Putative antitoxin AF_1481">
    <location>
        <begin position="1"/>
        <end position="69"/>
    </location>
</feature>